<feature type="chain" id="PRO_0000407806" description="Nucleolar protein 9">
    <location>
        <begin position="1"/>
        <end position="665"/>
    </location>
</feature>
<feature type="repeat" description="Pumilio 1">
    <location>
        <begin position="87"/>
        <end position="122"/>
    </location>
</feature>
<feature type="repeat" description="Pumilio 2">
    <location>
        <begin position="123"/>
        <end position="158"/>
    </location>
</feature>
<feature type="repeat" description="Pumilio 3">
    <location>
        <begin position="187"/>
        <end position="228"/>
    </location>
</feature>
<feature type="repeat" description="Pumilio 4">
    <location>
        <begin position="285"/>
        <end position="321"/>
    </location>
</feature>
<feature type="repeat" description="Pumilio 5">
    <location>
        <begin position="333"/>
        <end position="368"/>
    </location>
</feature>
<feature type="repeat" description="Pumilio 6">
    <location>
        <begin position="370"/>
        <end position="406"/>
    </location>
</feature>
<feature type="repeat" description="Pumilio 7">
    <location>
        <begin position="510"/>
        <end position="547"/>
    </location>
</feature>
<feature type="repeat" description="Pumilio 8">
    <location>
        <begin position="548"/>
        <end position="586"/>
    </location>
</feature>
<feature type="region of interest" description="Disordered" evidence="2">
    <location>
        <begin position="1"/>
        <end position="42"/>
    </location>
</feature>
<feature type="compositionally biased region" description="Basic residues" evidence="2">
    <location>
        <begin position="1"/>
        <end position="11"/>
    </location>
</feature>
<feature type="compositionally biased region" description="Basic and acidic residues" evidence="2">
    <location>
        <begin position="12"/>
        <end position="28"/>
    </location>
</feature>
<reference key="1">
    <citation type="journal article" date="2004" name="Nature">
        <title>Genome evolution in yeasts.</title>
        <authorList>
            <person name="Dujon B."/>
            <person name="Sherman D."/>
            <person name="Fischer G."/>
            <person name="Durrens P."/>
            <person name="Casaregola S."/>
            <person name="Lafontaine I."/>
            <person name="de Montigny J."/>
            <person name="Marck C."/>
            <person name="Neuveglise C."/>
            <person name="Talla E."/>
            <person name="Goffard N."/>
            <person name="Frangeul L."/>
            <person name="Aigle M."/>
            <person name="Anthouard V."/>
            <person name="Babour A."/>
            <person name="Barbe V."/>
            <person name="Barnay S."/>
            <person name="Blanchin S."/>
            <person name="Beckerich J.-M."/>
            <person name="Beyne E."/>
            <person name="Bleykasten C."/>
            <person name="Boisrame A."/>
            <person name="Boyer J."/>
            <person name="Cattolico L."/>
            <person name="Confanioleri F."/>
            <person name="de Daruvar A."/>
            <person name="Despons L."/>
            <person name="Fabre E."/>
            <person name="Fairhead C."/>
            <person name="Ferry-Dumazet H."/>
            <person name="Groppi A."/>
            <person name="Hantraye F."/>
            <person name="Hennequin C."/>
            <person name="Jauniaux N."/>
            <person name="Joyet P."/>
            <person name="Kachouri R."/>
            <person name="Kerrest A."/>
            <person name="Koszul R."/>
            <person name="Lemaire M."/>
            <person name="Lesur I."/>
            <person name="Ma L."/>
            <person name="Muller H."/>
            <person name="Nicaud J.-M."/>
            <person name="Nikolski M."/>
            <person name="Oztas S."/>
            <person name="Ozier-Kalogeropoulos O."/>
            <person name="Pellenz S."/>
            <person name="Potier S."/>
            <person name="Richard G.-F."/>
            <person name="Straub M.-L."/>
            <person name="Suleau A."/>
            <person name="Swennen D."/>
            <person name="Tekaia F."/>
            <person name="Wesolowski-Louvel M."/>
            <person name="Westhof E."/>
            <person name="Wirth B."/>
            <person name="Zeniou-Meyer M."/>
            <person name="Zivanovic Y."/>
            <person name="Bolotin-Fukuhara M."/>
            <person name="Thierry A."/>
            <person name="Bouchier C."/>
            <person name="Caudron B."/>
            <person name="Scarpelli C."/>
            <person name="Gaillardin C."/>
            <person name="Weissenbach J."/>
            <person name="Wincker P."/>
            <person name="Souciet J.-L."/>
        </authorList>
    </citation>
    <scope>NUCLEOTIDE SEQUENCE [LARGE SCALE GENOMIC DNA]</scope>
    <source>
        <strain>ATCC 2001 / BCRC 20586 / JCM 3761 / NBRC 0622 / NRRL Y-65 / CBS 138</strain>
    </source>
</reference>
<name>NOP9_CANGA</name>
<evidence type="ECO:0000250" key="1"/>
<evidence type="ECO:0000256" key="2">
    <source>
        <dbReference type="SAM" id="MobiDB-lite"/>
    </source>
</evidence>
<evidence type="ECO:0000305" key="3"/>
<organism>
    <name type="scientific">Candida glabrata (strain ATCC 2001 / BCRC 20586 / JCM 3761 / NBRC 0622 / NRRL Y-65 / CBS 138)</name>
    <name type="common">Yeast</name>
    <name type="synonym">Nakaseomyces glabratus</name>
    <dbReference type="NCBI Taxonomy" id="284593"/>
    <lineage>
        <taxon>Eukaryota</taxon>
        <taxon>Fungi</taxon>
        <taxon>Dikarya</taxon>
        <taxon>Ascomycota</taxon>
        <taxon>Saccharomycotina</taxon>
        <taxon>Saccharomycetes</taxon>
        <taxon>Saccharomycetales</taxon>
        <taxon>Saccharomycetaceae</taxon>
        <taxon>Nakaseomyces</taxon>
    </lineage>
</organism>
<accession>Q6FUX0</accession>
<dbReference type="EMBL" id="CR380951">
    <property type="protein sequence ID" value="CAG58893.1"/>
    <property type="molecule type" value="Genomic_DNA"/>
</dbReference>
<dbReference type="RefSeq" id="XP_445974.1">
    <property type="nucleotide sequence ID" value="XM_445974.1"/>
</dbReference>
<dbReference type="SMR" id="Q6FUX0"/>
<dbReference type="FunCoup" id="Q6FUX0">
    <property type="interactions" value="992"/>
</dbReference>
<dbReference type="STRING" id="284593.Q6FUX0"/>
<dbReference type="EnsemblFungi" id="CAGL0E06534g-T">
    <property type="protein sequence ID" value="CAGL0E06534g-T-p1"/>
    <property type="gene ID" value="CAGL0E06534g"/>
</dbReference>
<dbReference type="KEGG" id="cgr:2887295"/>
<dbReference type="CGD" id="CAL0128762">
    <property type="gene designation" value="CAGL0E06534g"/>
</dbReference>
<dbReference type="VEuPathDB" id="FungiDB:CAGL0E06534g"/>
<dbReference type="eggNOG" id="KOG2188">
    <property type="taxonomic scope" value="Eukaryota"/>
</dbReference>
<dbReference type="HOGENOM" id="CLU_008720_1_1_1"/>
<dbReference type="InParanoid" id="Q6FUX0"/>
<dbReference type="OMA" id="HHLVRNF"/>
<dbReference type="Proteomes" id="UP000002428">
    <property type="component" value="Chromosome E"/>
</dbReference>
<dbReference type="GO" id="GO:0030686">
    <property type="term" value="C:90S preribosome"/>
    <property type="evidence" value="ECO:0007669"/>
    <property type="project" value="EnsemblFungi"/>
</dbReference>
<dbReference type="GO" id="GO:0005730">
    <property type="term" value="C:nucleolus"/>
    <property type="evidence" value="ECO:0007669"/>
    <property type="project" value="UniProtKB-SubCell"/>
</dbReference>
<dbReference type="GO" id="GO:0030688">
    <property type="term" value="C:preribosome, small subunit precursor"/>
    <property type="evidence" value="ECO:0007669"/>
    <property type="project" value="EnsemblFungi"/>
</dbReference>
<dbReference type="GO" id="GO:0032040">
    <property type="term" value="C:small-subunit processome"/>
    <property type="evidence" value="ECO:0007669"/>
    <property type="project" value="EnsemblFungi"/>
</dbReference>
<dbReference type="GO" id="GO:0003729">
    <property type="term" value="F:mRNA binding"/>
    <property type="evidence" value="ECO:0007669"/>
    <property type="project" value="UniProtKB-ARBA"/>
</dbReference>
<dbReference type="GO" id="GO:0000480">
    <property type="term" value="P:endonucleolytic cleavage in 5'-ETS of tricistronic rRNA transcript (SSU-rRNA, 5.8S rRNA, LSU-rRNA)"/>
    <property type="evidence" value="ECO:0007669"/>
    <property type="project" value="EnsemblFungi"/>
</dbReference>
<dbReference type="GO" id="GO:0000447">
    <property type="term" value="P:endonucleolytic cleavage in ITS1 to separate SSU-rRNA from 5.8S rRNA and LSU-rRNA from tricistronic rRNA transcript (SSU-rRNA, 5.8S rRNA, LSU-rRNA)"/>
    <property type="evidence" value="ECO:0007669"/>
    <property type="project" value="EnsemblFungi"/>
</dbReference>
<dbReference type="GO" id="GO:0000472">
    <property type="term" value="P:endonucleolytic cleavage to generate mature 5'-end of SSU-rRNA from (SSU-rRNA, 5.8S rRNA, LSU-rRNA)"/>
    <property type="evidence" value="ECO:0007669"/>
    <property type="project" value="EnsemblFungi"/>
</dbReference>
<dbReference type="GO" id="GO:0010629">
    <property type="term" value="P:negative regulation of gene expression"/>
    <property type="evidence" value="ECO:0007669"/>
    <property type="project" value="UniProtKB-ARBA"/>
</dbReference>
<dbReference type="GO" id="GO:0010608">
    <property type="term" value="P:post-transcriptional regulation of gene expression"/>
    <property type="evidence" value="ECO:0007669"/>
    <property type="project" value="UniProtKB-ARBA"/>
</dbReference>
<dbReference type="GO" id="GO:0065008">
    <property type="term" value="P:regulation of biological quality"/>
    <property type="evidence" value="ECO:0007669"/>
    <property type="project" value="UniProtKB-ARBA"/>
</dbReference>
<dbReference type="GO" id="GO:0080090">
    <property type="term" value="P:regulation of primary metabolic process"/>
    <property type="evidence" value="ECO:0007669"/>
    <property type="project" value="UniProtKB-ARBA"/>
</dbReference>
<dbReference type="GO" id="GO:0000056">
    <property type="term" value="P:ribosomal small subunit export from nucleus"/>
    <property type="evidence" value="ECO:0007669"/>
    <property type="project" value="EnsemblFungi"/>
</dbReference>
<dbReference type="Gene3D" id="1.25.10.10">
    <property type="entry name" value="Leucine-rich Repeat Variant"/>
    <property type="match status" value="2"/>
</dbReference>
<dbReference type="InterPro" id="IPR011989">
    <property type="entry name" value="ARM-like"/>
</dbReference>
<dbReference type="InterPro" id="IPR016024">
    <property type="entry name" value="ARM-type_fold"/>
</dbReference>
<dbReference type="InterPro" id="IPR040000">
    <property type="entry name" value="NOP9"/>
</dbReference>
<dbReference type="InterPro" id="IPR033133">
    <property type="entry name" value="PUM-HD"/>
</dbReference>
<dbReference type="InterPro" id="IPR001313">
    <property type="entry name" value="Pumilio_RNA-bd_rpt"/>
</dbReference>
<dbReference type="PANTHER" id="PTHR13102">
    <property type="entry name" value="NUCLEOLAR PROTEIN 9"/>
    <property type="match status" value="1"/>
</dbReference>
<dbReference type="PANTHER" id="PTHR13102:SF0">
    <property type="entry name" value="NUCLEOLAR PROTEIN 9"/>
    <property type="match status" value="1"/>
</dbReference>
<dbReference type="Pfam" id="PF22493">
    <property type="entry name" value="PUF_NOP9"/>
    <property type="match status" value="1"/>
</dbReference>
<dbReference type="SMART" id="SM00025">
    <property type="entry name" value="Pumilio"/>
    <property type="match status" value="8"/>
</dbReference>
<dbReference type="SUPFAM" id="SSF48371">
    <property type="entry name" value="ARM repeat"/>
    <property type="match status" value="1"/>
</dbReference>
<dbReference type="PROSITE" id="PS50303">
    <property type="entry name" value="PUM_HD"/>
    <property type="match status" value="1"/>
</dbReference>
<gene>
    <name type="primary">NOP9</name>
    <name type="ordered locus">CAGL0E06534g</name>
</gene>
<comment type="function">
    <text evidence="1">RNA-binding nucleolar protein required for pre-rRNA processing. Involved in production of 18S rRNA and assembly of small ribosomal subunit (By similarity).</text>
</comment>
<comment type="subcellular location">
    <subcellularLocation>
        <location evidence="1">Nucleus</location>
        <location evidence="1">Nucleolus</location>
    </subcellularLocation>
</comment>
<comment type="similarity">
    <text evidence="3">Belongs to the NOP9 family.</text>
</comment>
<proteinExistence type="inferred from homology"/>
<sequence length="665" mass="77401">MGKPRGRKLEKKIKDQEFHPEQDSEKISENYNYDGHPESDTSNPQMFFGVLDRDELEYFKQTEATLSLDTFETEEEKAQFVTNVIQEAEGKELKLVTSQICSKLMERLILNCNDIQLKKLFQAFNGNFYNISCHKYASHVVETLLVRSASLVEKELITPHFDNMDASVDGSDVFAPMESLFLFMLNEIKPHLKSMINHQYASHVLRLIILILSSKTLPSTTQNNSIVRSKKSKIARKMIDLKDNEDFNKVYQTPESFKSELKMMLNDLYSDLTGHAKPKAEINPTVITKFREFCVDKVASPVIQLIIQVEGIFDRDRSFWRLAFNTNDEKDAKEQSFMEYLLSDPVGSHFLENVISFAKTKYVERLYRVYIKDQIVRLAKRDTTGAFVIQSLLKNMKDKEVKEILDALLPDLSILLNSNMDFGTTIINACIKQNNYKRDEVIGQLMKKYYPDGSSEKNILESCLLLASSTLGNTKDDWPTAEERRRSIFLEELIDFDDKFLEVAIESMLNLPEERLLQMCYHGVFSHVVEHVLQVQRVDIIKRKLLLNILIKDIVKLACNAYGSHIVDKLWDFTAKLTLYKERIAAALVENSEMVKNSVYGRQVWKNWQLEKYIRKRWEWKKIIKESDLETFPNMRVLQPNMQERAAIKRKNDDKAFDSMKKSRK</sequence>
<keyword id="KW-0539">Nucleus</keyword>
<keyword id="KW-1185">Reference proteome</keyword>
<keyword id="KW-0677">Repeat</keyword>
<keyword id="KW-0690">Ribosome biogenesis</keyword>
<keyword id="KW-0698">rRNA processing</keyword>
<protein>
    <recommendedName>
        <fullName>Nucleolar protein 9</fullName>
    </recommendedName>
    <alternativeName>
        <fullName>Pumilio domain-containing protein NOP9</fullName>
    </alternativeName>
</protein>